<protein>
    <recommendedName>
        <fullName evidence="1">Nucleoside diphosphate kinase</fullName>
        <shortName evidence="1">NDK</shortName>
        <shortName evidence="1">NDP kinase</shortName>
        <ecNumber evidence="1">2.7.4.6</ecNumber>
    </recommendedName>
    <alternativeName>
        <fullName evidence="1">Nucleoside-2-P kinase</fullName>
    </alternativeName>
</protein>
<sequence>MADTERTFVMVKPDGVQRGLIGDIVSRFEDRGLKLVAGKFMQIDDELAREHYAEHVDKPFFDELKEFITSGPVFAMVWEGQDAVAQVRTMMGETDPAESAPGTIRGDFGLDLGRNVIHGSDTEPGSAEREIGLFFDDDELQDYERIDEPWLYE</sequence>
<accession>Q3IPM6</accession>
<organism>
    <name type="scientific">Natronomonas pharaonis (strain ATCC 35678 / DSM 2160 / CIP 103997 / JCM 8858 / NBRC 14720 / NCIMB 2260 / Gabara)</name>
    <name type="common">Halobacterium pharaonis</name>
    <dbReference type="NCBI Taxonomy" id="348780"/>
    <lineage>
        <taxon>Archaea</taxon>
        <taxon>Methanobacteriati</taxon>
        <taxon>Methanobacteriota</taxon>
        <taxon>Stenosarchaea group</taxon>
        <taxon>Halobacteria</taxon>
        <taxon>Halobacteriales</taxon>
        <taxon>Haloarculaceae</taxon>
        <taxon>Natronomonas</taxon>
    </lineage>
</organism>
<comment type="function">
    <text evidence="1">Major role in the synthesis of nucleoside triphosphates other than ATP. The ATP gamma phosphate is transferred to the NDP beta phosphate via a ping-pong mechanism, using a phosphorylated active-site intermediate.</text>
</comment>
<comment type="catalytic activity">
    <reaction evidence="1">
        <text>a 2'-deoxyribonucleoside 5'-diphosphate + ATP = a 2'-deoxyribonucleoside 5'-triphosphate + ADP</text>
        <dbReference type="Rhea" id="RHEA:44640"/>
        <dbReference type="ChEBI" id="CHEBI:30616"/>
        <dbReference type="ChEBI" id="CHEBI:61560"/>
        <dbReference type="ChEBI" id="CHEBI:73316"/>
        <dbReference type="ChEBI" id="CHEBI:456216"/>
        <dbReference type="EC" id="2.7.4.6"/>
    </reaction>
</comment>
<comment type="catalytic activity">
    <reaction evidence="1">
        <text>a ribonucleoside 5'-diphosphate + ATP = a ribonucleoside 5'-triphosphate + ADP</text>
        <dbReference type="Rhea" id="RHEA:18113"/>
        <dbReference type="ChEBI" id="CHEBI:30616"/>
        <dbReference type="ChEBI" id="CHEBI:57930"/>
        <dbReference type="ChEBI" id="CHEBI:61557"/>
        <dbReference type="ChEBI" id="CHEBI:456216"/>
        <dbReference type="EC" id="2.7.4.6"/>
    </reaction>
</comment>
<comment type="cofactor">
    <cofactor evidence="1">
        <name>Mg(2+)</name>
        <dbReference type="ChEBI" id="CHEBI:18420"/>
    </cofactor>
</comment>
<comment type="subcellular location">
    <subcellularLocation>
        <location evidence="1">Cytoplasm</location>
    </subcellularLocation>
</comment>
<comment type="similarity">
    <text evidence="1">Belongs to the NDK family.</text>
</comment>
<reference key="1">
    <citation type="journal article" date="2005" name="Genome Res.">
        <title>Living with two extremes: conclusions from the genome sequence of Natronomonas pharaonis.</title>
        <authorList>
            <person name="Falb M."/>
            <person name="Pfeiffer F."/>
            <person name="Palm P."/>
            <person name="Rodewald K."/>
            <person name="Hickmann V."/>
            <person name="Tittor J."/>
            <person name="Oesterhelt D."/>
        </authorList>
    </citation>
    <scope>NUCLEOTIDE SEQUENCE [LARGE SCALE GENOMIC DNA]</scope>
    <source>
        <strain>ATCC 35678 / DSM 2160 / CIP 103997 / JCM 8858 / NBRC 14720 / NCIMB 2260 / Gabara</strain>
    </source>
</reference>
<name>NDK_NATPD</name>
<evidence type="ECO:0000255" key="1">
    <source>
        <dbReference type="HAMAP-Rule" id="MF_00451"/>
    </source>
</evidence>
<keyword id="KW-0067">ATP-binding</keyword>
<keyword id="KW-0963">Cytoplasm</keyword>
<keyword id="KW-0418">Kinase</keyword>
<keyword id="KW-0460">Magnesium</keyword>
<keyword id="KW-0479">Metal-binding</keyword>
<keyword id="KW-0546">Nucleotide metabolism</keyword>
<keyword id="KW-0547">Nucleotide-binding</keyword>
<keyword id="KW-0597">Phosphoprotein</keyword>
<keyword id="KW-1185">Reference proteome</keyword>
<keyword id="KW-0808">Transferase</keyword>
<feature type="chain" id="PRO_0000226589" description="Nucleoside diphosphate kinase">
    <location>
        <begin position="1"/>
        <end position="153"/>
    </location>
</feature>
<feature type="active site" description="Pros-phosphohistidine intermediate" evidence="1">
    <location>
        <position position="118"/>
    </location>
</feature>
<feature type="binding site" evidence="1">
    <location>
        <position position="12"/>
    </location>
    <ligand>
        <name>ATP</name>
        <dbReference type="ChEBI" id="CHEBI:30616"/>
    </ligand>
</feature>
<feature type="binding site" evidence="1">
    <location>
        <position position="60"/>
    </location>
    <ligand>
        <name>ATP</name>
        <dbReference type="ChEBI" id="CHEBI:30616"/>
    </ligand>
</feature>
<feature type="binding site" evidence="1">
    <location>
        <position position="88"/>
    </location>
    <ligand>
        <name>ATP</name>
        <dbReference type="ChEBI" id="CHEBI:30616"/>
    </ligand>
</feature>
<feature type="binding site" evidence="1">
    <location>
        <position position="94"/>
    </location>
    <ligand>
        <name>ATP</name>
        <dbReference type="ChEBI" id="CHEBI:30616"/>
    </ligand>
</feature>
<feature type="binding site" evidence="1">
    <location>
        <position position="105"/>
    </location>
    <ligand>
        <name>ATP</name>
        <dbReference type="ChEBI" id="CHEBI:30616"/>
    </ligand>
</feature>
<feature type="binding site" evidence="1">
    <location>
        <position position="115"/>
    </location>
    <ligand>
        <name>ATP</name>
        <dbReference type="ChEBI" id="CHEBI:30616"/>
    </ligand>
</feature>
<dbReference type="EC" id="2.7.4.6" evidence="1"/>
<dbReference type="EMBL" id="CR936257">
    <property type="protein sequence ID" value="CAI49924.1"/>
    <property type="molecule type" value="Genomic_DNA"/>
</dbReference>
<dbReference type="RefSeq" id="WP_011323542.1">
    <property type="nucleotide sequence ID" value="NC_007426.1"/>
</dbReference>
<dbReference type="SMR" id="Q3IPM6"/>
<dbReference type="STRING" id="348780.NP_3666A"/>
<dbReference type="EnsemblBacteria" id="CAI49924">
    <property type="protein sequence ID" value="CAI49924"/>
    <property type="gene ID" value="NP_3666A"/>
</dbReference>
<dbReference type="GeneID" id="3702971"/>
<dbReference type="KEGG" id="nph:NP_3666A"/>
<dbReference type="eggNOG" id="arCOG04313">
    <property type="taxonomic scope" value="Archaea"/>
</dbReference>
<dbReference type="HOGENOM" id="CLU_060216_6_3_2"/>
<dbReference type="OrthoDB" id="6874at2157"/>
<dbReference type="Proteomes" id="UP000002698">
    <property type="component" value="Chromosome"/>
</dbReference>
<dbReference type="GO" id="GO:0005737">
    <property type="term" value="C:cytoplasm"/>
    <property type="evidence" value="ECO:0007669"/>
    <property type="project" value="UniProtKB-SubCell"/>
</dbReference>
<dbReference type="GO" id="GO:0005524">
    <property type="term" value="F:ATP binding"/>
    <property type="evidence" value="ECO:0007669"/>
    <property type="project" value="UniProtKB-UniRule"/>
</dbReference>
<dbReference type="GO" id="GO:0046872">
    <property type="term" value="F:metal ion binding"/>
    <property type="evidence" value="ECO:0007669"/>
    <property type="project" value="UniProtKB-KW"/>
</dbReference>
<dbReference type="GO" id="GO:0004550">
    <property type="term" value="F:nucleoside diphosphate kinase activity"/>
    <property type="evidence" value="ECO:0007669"/>
    <property type="project" value="UniProtKB-UniRule"/>
</dbReference>
<dbReference type="GO" id="GO:0006241">
    <property type="term" value="P:CTP biosynthetic process"/>
    <property type="evidence" value="ECO:0007669"/>
    <property type="project" value="UniProtKB-UniRule"/>
</dbReference>
<dbReference type="GO" id="GO:0006183">
    <property type="term" value="P:GTP biosynthetic process"/>
    <property type="evidence" value="ECO:0007669"/>
    <property type="project" value="UniProtKB-UniRule"/>
</dbReference>
<dbReference type="GO" id="GO:0006228">
    <property type="term" value="P:UTP biosynthetic process"/>
    <property type="evidence" value="ECO:0007669"/>
    <property type="project" value="UniProtKB-UniRule"/>
</dbReference>
<dbReference type="CDD" id="cd04413">
    <property type="entry name" value="NDPk_I"/>
    <property type="match status" value="1"/>
</dbReference>
<dbReference type="FunFam" id="3.30.70.141:FF:000002">
    <property type="entry name" value="Nucleoside diphosphate kinase"/>
    <property type="match status" value="1"/>
</dbReference>
<dbReference type="Gene3D" id="3.30.70.141">
    <property type="entry name" value="Nucleoside diphosphate kinase-like domain"/>
    <property type="match status" value="1"/>
</dbReference>
<dbReference type="HAMAP" id="MF_00451">
    <property type="entry name" value="NDP_kinase"/>
    <property type="match status" value="1"/>
</dbReference>
<dbReference type="InterPro" id="IPR034907">
    <property type="entry name" value="NDK-like_dom"/>
</dbReference>
<dbReference type="InterPro" id="IPR036850">
    <property type="entry name" value="NDK-like_dom_sf"/>
</dbReference>
<dbReference type="InterPro" id="IPR001564">
    <property type="entry name" value="Nucleoside_diP_kinase"/>
</dbReference>
<dbReference type="NCBIfam" id="NF001908">
    <property type="entry name" value="PRK00668.1"/>
    <property type="match status" value="1"/>
</dbReference>
<dbReference type="PANTHER" id="PTHR11349">
    <property type="entry name" value="NUCLEOSIDE DIPHOSPHATE KINASE"/>
    <property type="match status" value="1"/>
</dbReference>
<dbReference type="Pfam" id="PF00334">
    <property type="entry name" value="NDK"/>
    <property type="match status" value="1"/>
</dbReference>
<dbReference type="PRINTS" id="PR01243">
    <property type="entry name" value="NUCDPKINASE"/>
</dbReference>
<dbReference type="SMART" id="SM00562">
    <property type="entry name" value="NDK"/>
    <property type="match status" value="1"/>
</dbReference>
<dbReference type="SUPFAM" id="SSF54919">
    <property type="entry name" value="Nucleoside diphosphate kinase, NDK"/>
    <property type="match status" value="1"/>
</dbReference>
<dbReference type="PROSITE" id="PS51374">
    <property type="entry name" value="NDPK_LIKE"/>
    <property type="match status" value="1"/>
</dbReference>
<gene>
    <name evidence="1" type="primary">ndk</name>
    <name type="ordered locus">NP_3666A</name>
</gene>
<proteinExistence type="inferred from homology"/>